<reference key="1">
    <citation type="journal article" date="2009" name="BMC Genomics">
        <title>Evidence for niche adaptation in the genome of the bovine pathogen Streptococcus uberis.</title>
        <authorList>
            <person name="Ward P.N."/>
            <person name="Holden M.T.G."/>
            <person name="Leigh J.A."/>
            <person name="Lennard N."/>
            <person name="Bignell A."/>
            <person name="Barron A."/>
            <person name="Clark L."/>
            <person name="Quail M.A."/>
            <person name="Woodward J."/>
            <person name="Barrell B.G."/>
            <person name="Egan S.A."/>
            <person name="Field T.R."/>
            <person name="Maskell D."/>
            <person name="Kehoe M."/>
            <person name="Dowson C.G."/>
            <person name="Chanter N."/>
            <person name="Whatmore A.M."/>
            <person name="Bentley S.D."/>
            <person name="Parkhill J."/>
        </authorList>
    </citation>
    <scope>NUCLEOTIDE SEQUENCE [LARGE SCALE GENOMIC DNA]</scope>
    <source>
        <strain>ATCC BAA-854 / 0140J</strain>
    </source>
</reference>
<comment type="function">
    <text evidence="1">Catalyzes the interconversion of beta-pyran and beta-furan forms of D-ribose.</text>
</comment>
<comment type="catalytic activity">
    <reaction evidence="1">
        <text>beta-D-ribopyranose = beta-D-ribofuranose</text>
        <dbReference type="Rhea" id="RHEA:25432"/>
        <dbReference type="ChEBI" id="CHEBI:27476"/>
        <dbReference type="ChEBI" id="CHEBI:47002"/>
        <dbReference type="EC" id="5.4.99.62"/>
    </reaction>
</comment>
<comment type="pathway">
    <text evidence="1">Carbohydrate metabolism; D-ribose degradation; D-ribose 5-phosphate from beta-D-ribopyranose: step 1/2.</text>
</comment>
<comment type="subunit">
    <text evidence="1">Homodecamer.</text>
</comment>
<comment type="subcellular location">
    <subcellularLocation>
        <location evidence="1">Cytoplasm</location>
    </subcellularLocation>
</comment>
<comment type="similarity">
    <text evidence="1">Belongs to the RbsD / FucU family. RbsD subfamily.</text>
</comment>
<feature type="chain" id="PRO_1000187169" description="D-ribose pyranase">
    <location>
        <begin position="1"/>
        <end position="132"/>
    </location>
</feature>
<feature type="active site" description="Proton donor" evidence="1">
    <location>
        <position position="20"/>
    </location>
</feature>
<feature type="binding site" evidence="1">
    <location>
        <position position="28"/>
    </location>
    <ligand>
        <name>substrate</name>
    </ligand>
</feature>
<feature type="binding site" evidence="1">
    <location>
        <position position="99"/>
    </location>
    <ligand>
        <name>substrate</name>
    </ligand>
</feature>
<feature type="binding site" evidence="1">
    <location>
        <begin position="121"/>
        <end position="123"/>
    </location>
    <ligand>
        <name>substrate</name>
    </ligand>
</feature>
<dbReference type="EC" id="5.4.99.62" evidence="1"/>
<dbReference type="EMBL" id="AM946015">
    <property type="protein sequence ID" value="CAR42857.1"/>
    <property type="molecule type" value="Genomic_DNA"/>
</dbReference>
<dbReference type="RefSeq" id="WP_015911636.1">
    <property type="nucleotide sequence ID" value="NC_012004.1"/>
</dbReference>
<dbReference type="SMR" id="B9DUX3"/>
<dbReference type="STRING" id="218495.SUB1310"/>
<dbReference type="GeneID" id="93826579"/>
<dbReference type="KEGG" id="sub:SUB1310"/>
<dbReference type="eggNOG" id="COG1869">
    <property type="taxonomic scope" value="Bacteria"/>
</dbReference>
<dbReference type="HOGENOM" id="CLU_135498_0_0_9"/>
<dbReference type="OrthoDB" id="9805009at2"/>
<dbReference type="UniPathway" id="UPA00916">
    <property type="reaction ID" value="UER00888"/>
</dbReference>
<dbReference type="Proteomes" id="UP000000449">
    <property type="component" value="Chromosome"/>
</dbReference>
<dbReference type="GO" id="GO:0005829">
    <property type="term" value="C:cytosol"/>
    <property type="evidence" value="ECO:0007669"/>
    <property type="project" value="TreeGrafter"/>
</dbReference>
<dbReference type="GO" id="GO:0062193">
    <property type="term" value="F:D-ribose pyranase activity"/>
    <property type="evidence" value="ECO:0007669"/>
    <property type="project" value="UniProtKB-EC"/>
</dbReference>
<dbReference type="GO" id="GO:0016872">
    <property type="term" value="F:intramolecular lyase activity"/>
    <property type="evidence" value="ECO:0007669"/>
    <property type="project" value="UniProtKB-UniRule"/>
</dbReference>
<dbReference type="GO" id="GO:0048029">
    <property type="term" value="F:monosaccharide binding"/>
    <property type="evidence" value="ECO:0007669"/>
    <property type="project" value="InterPro"/>
</dbReference>
<dbReference type="GO" id="GO:0019303">
    <property type="term" value="P:D-ribose catabolic process"/>
    <property type="evidence" value="ECO:0007669"/>
    <property type="project" value="UniProtKB-UniRule"/>
</dbReference>
<dbReference type="Gene3D" id="3.40.1650.10">
    <property type="entry name" value="RbsD-like domain"/>
    <property type="match status" value="1"/>
</dbReference>
<dbReference type="HAMAP" id="MF_01661">
    <property type="entry name" value="D_rib_pyranase"/>
    <property type="match status" value="1"/>
</dbReference>
<dbReference type="InterPro" id="IPR023064">
    <property type="entry name" value="D-ribose_pyranase"/>
</dbReference>
<dbReference type="InterPro" id="IPR023750">
    <property type="entry name" value="RbsD-like_sf"/>
</dbReference>
<dbReference type="InterPro" id="IPR007721">
    <property type="entry name" value="RbsD_FucU"/>
</dbReference>
<dbReference type="NCBIfam" id="NF008761">
    <property type="entry name" value="PRK11797.1"/>
    <property type="match status" value="1"/>
</dbReference>
<dbReference type="PANTHER" id="PTHR37831">
    <property type="entry name" value="D-RIBOSE PYRANASE"/>
    <property type="match status" value="1"/>
</dbReference>
<dbReference type="PANTHER" id="PTHR37831:SF1">
    <property type="entry name" value="D-RIBOSE PYRANASE"/>
    <property type="match status" value="1"/>
</dbReference>
<dbReference type="Pfam" id="PF05025">
    <property type="entry name" value="RbsD_FucU"/>
    <property type="match status" value="1"/>
</dbReference>
<dbReference type="SUPFAM" id="SSF102546">
    <property type="entry name" value="RbsD-like"/>
    <property type="match status" value="1"/>
</dbReference>
<sequence>MKKHGILNSDLAKIVDDLGHTDRVCIGDLGLPIPSGVRKIDLSLKAGFPSFQDLLDVYLEHVLVEKIILAEEIKEQNPEQLSQILRKLDDGVTVEYVSHEQLKALNQDVKAVIRTGENTPYSNIILQSGVTI</sequence>
<gene>
    <name evidence="1" type="primary">rbsD</name>
    <name type="ordered locus">SUB1310</name>
</gene>
<proteinExistence type="inferred from homology"/>
<accession>B9DUX3</accession>
<name>RBSD_STRU0</name>
<protein>
    <recommendedName>
        <fullName evidence="1">D-ribose pyranase</fullName>
        <ecNumber evidence="1">5.4.99.62</ecNumber>
    </recommendedName>
</protein>
<evidence type="ECO:0000255" key="1">
    <source>
        <dbReference type="HAMAP-Rule" id="MF_01661"/>
    </source>
</evidence>
<keyword id="KW-0119">Carbohydrate metabolism</keyword>
<keyword id="KW-0963">Cytoplasm</keyword>
<keyword id="KW-0413">Isomerase</keyword>
<keyword id="KW-1185">Reference proteome</keyword>
<organism>
    <name type="scientific">Streptococcus uberis (strain ATCC BAA-854 / 0140J)</name>
    <dbReference type="NCBI Taxonomy" id="218495"/>
    <lineage>
        <taxon>Bacteria</taxon>
        <taxon>Bacillati</taxon>
        <taxon>Bacillota</taxon>
        <taxon>Bacilli</taxon>
        <taxon>Lactobacillales</taxon>
        <taxon>Streptococcaceae</taxon>
        <taxon>Streptococcus</taxon>
    </lineage>
</organism>